<comment type="function">
    <text evidence="1">With S4 and S5 plays an important role in translational accuracy.</text>
</comment>
<comment type="function">
    <text evidence="1">Interacts with and stabilizes bases of the 16S rRNA that are involved in tRNA selection in the A site and with the mRNA backbone. Located at the interface of the 30S and 50S subunits, it traverses the body of the 30S subunit contacting proteins on the other side and probably holding the rRNA structure together. The combined cluster of proteins S8, S12 and S17 appears to hold together the shoulder and platform of the 30S subunit.</text>
</comment>
<comment type="subunit">
    <text evidence="1">Part of the 30S ribosomal subunit. Contacts proteins S8 and S17. May interact with IF1 in the 30S initiation complex.</text>
</comment>
<comment type="similarity">
    <text evidence="1">Belongs to the universal ribosomal protein uS12 family.</text>
</comment>
<comment type="caution">
    <text evidence="3">Because the enzyme that would modify Asp-89 to 3-methylthioaspartic acid has not been found in the proteome of this organism, that modification is not predicted.</text>
</comment>
<comment type="sequence caution" evidence="3">
    <conflict type="erroneous initiation">
        <sequence resource="EMBL-CDS" id="AAF85428"/>
    </conflict>
</comment>
<feature type="chain" id="PRO_0000146359" description="Small ribosomal subunit protein uS12">
    <location>
        <begin position="1"/>
        <end position="124"/>
    </location>
</feature>
<feature type="region of interest" description="Disordered" evidence="2">
    <location>
        <begin position="1"/>
        <end position="25"/>
    </location>
</feature>
<name>RS12_XYLFA</name>
<accession>P66379</accession>
<accession>Q9PA88</accession>
<evidence type="ECO:0000255" key="1">
    <source>
        <dbReference type="HAMAP-Rule" id="MF_00403"/>
    </source>
</evidence>
<evidence type="ECO:0000256" key="2">
    <source>
        <dbReference type="SAM" id="MobiDB-lite"/>
    </source>
</evidence>
<evidence type="ECO:0000305" key="3"/>
<organism>
    <name type="scientific">Xylella fastidiosa (strain 9a5c)</name>
    <dbReference type="NCBI Taxonomy" id="160492"/>
    <lineage>
        <taxon>Bacteria</taxon>
        <taxon>Pseudomonadati</taxon>
        <taxon>Pseudomonadota</taxon>
        <taxon>Gammaproteobacteria</taxon>
        <taxon>Lysobacterales</taxon>
        <taxon>Lysobacteraceae</taxon>
        <taxon>Xylella</taxon>
    </lineage>
</organism>
<protein>
    <recommendedName>
        <fullName evidence="1">Small ribosomal subunit protein uS12</fullName>
    </recommendedName>
    <alternativeName>
        <fullName evidence="3">30S ribosomal protein S12</fullName>
    </alternativeName>
</protein>
<keyword id="KW-0687">Ribonucleoprotein</keyword>
<keyword id="KW-0689">Ribosomal protein</keyword>
<keyword id="KW-0694">RNA-binding</keyword>
<keyword id="KW-0699">rRNA-binding</keyword>
<keyword id="KW-0820">tRNA-binding</keyword>
<gene>
    <name evidence="1" type="primary">rpsL</name>
    <name type="ordered locus">XF_2631</name>
</gene>
<proteinExistence type="inferred from homology"/>
<dbReference type="EMBL" id="AE003849">
    <property type="protein sequence ID" value="AAF85428.1"/>
    <property type="status" value="ALT_INIT"/>
    <property type="molecule type" value="Genomic_DNA"/>
</dbReference>
<dbReference type="PIR" id="H82534">
    <property type="entry name" value="H82534"/>
</dbReference>
<dbReference type="RefSeq" id="WP_004084687.1">
    <property type="nucleotide sequence ID" value="NC_002488.3"/>
</dbReference>
<dbReference type="SMR" id="P66379"/>
<dbReference type="STRING" id="160492.XF_2631"/>
<dbReference type="GeneID" id="93905860"/>
<dbReference type="KEGG" id="xfa:XF_2631"/>
<dbReference type="eggNOG" id="COG0048">
    <property type="taxonomic scope" value="Bacteria"/>
</dbReference>
<dbReference type="HOGENOM" id="CLU_104295_1_2_6"/>
<dbReference type="Proteomes" id="UP000000812">
    <property type="component" value="Chromosome"/>
</dbReference>
<dbReference type="GO" id="GO:0015935">
    <property type="term" value="C:small ribosomal subunit"/>
    <property type="evidence" value="ECO:0007669"/>
    <property type="project" value="InterPro"/>
</dbReference>
<dbReference type="GO" id="GO:0019843">
    <property type="term" value="F:rRNA binding"/>
    <property type="evidence" value="ECO:0007669"/>
    <property type="project" value="UniProtKB-UniRule"/>
</dbReference>
<dbReference type="GO" id="GO:0003735">
    <property type="term" value="F:structural constituent of ribosome"/>
    <property type="evidence" value="ECO:0007669"/>
    <property type="project" value="InterPro"/>
</dbReference>
<dbReference type="GO" id="GO:0000049">
    <property type="term" value="F:tRNA binding"/>
    <property type="evidence" value="ECO:0007669"/>
    <property type="project" value="UniProtKB-UniRule"/>
</dbReference>
<dbReference type="GO" id="GO:0006412">
    <property type="term" value="P:translation"/>
    <property type="evidence" value="ECO:0007669"/>
    <property type="project" value="UniProtKB-UniRule"/>
</dbReference>
<dbReference type="CDD" id="cd03368">
    <property type="entry name" value="Ribosomal_S12"/>
    <property type="match status" value="1"/>
</dbReference>
<dbReference type="FunFam" id="2.40.50.140:FF:000001">
    <property type="entry name" value="30S ribosomal protein S12"/>
    <property type="match status" value="1"/>
</dbReference>
<dbReference type="Gene3D" id="2.40.50.140">
    <property type="entry name" value="Nucleic acid-binding proteins"/>
    <property type="match status" value="1"/>
</dbReference>
<dbReference type="HAMAP" id="MF_00403_B">
    <property type="entry name" value="Ribosomal_uS12_B"/>
    <property type="match status" value="1"/>
</dbReference>
<dbReference type="InterPro" id="IPR012340">
    <property type="entry name" value="NA-bd_OB-fold"/>
</dbReference>
<dbReference type="InterPro" id="IPR006032">
    <property type="entry name" value="Ribosomal_uS12"/>
</dbReference>
<dbReference type="InterPro" id="IPR005679">
    <property type="entry name" value="Ribosomal_uS12_bac"/>
</dbReference>
<dbReference type="NCBIfam" id="TIGR00981">
    <property type="entry name" value="rpsL_bact"/>
    <property type="match status" value="1"/>
</dbReference>
<dbReference type="PANTHER" id="PTHR11652">
    <property type="entry name" value="30S RIBOSOMAL PROTEIN S12 FAMILY MEMBER"/>
    <property type="match status" value="1"/>
</dbReference>
<dbReference type="Pfam" id="PF00164">
    <property type="entry name" value="Ribosom_S12_S23"/>
    <property type="match status" value="1"/>
</dbReference>
<dbReference type="PIRSF" id="PIRSF002133">
    <property type="entry name" value="Ribosomal_S12/S23"/>
    <property type="match status" value="1"/>
</dbReference>
<dbReference type="PRINTS" id="PR01034">
    <property type="entry name" value="RIBOSOMALS12"/>
</dbReference>
<dbReference type="SUPFAM" id="SSF50249">
    <property type="entry name" value="Nucleic acid-binding proteins"/>
    <property type="match status" value="1"/>
</dbReference>
<dbReference type="PROSITE" id="PS00055">
    <property type="entry name" value="RIBOSOMAL_S12"/>
    <property type="match status" value="1"/>
</dbReference>
<sequence length="124" mass="13695">MATINQLVRKPRQASTYKSASPALDKCPQRRGVCTRVYTSTPKKPNSALRKVAKVRLTNQEEVISYIGGEGHNLQEHSVVLIRGGRVKDLPGVRYHTVRGSLDAAGVAKRRQGRSKYGAKRPKS</sequence>
<reference key="1">
    <citation type="journal article" date="2000" name="Nature">
        <title>The genome sequence of the plant pathogen Xylella fastidiosa.</title>
        <authorList>
            <person name="Simpson A.J.G."/>
            <person name="Reinach F.C."/>
            <person name="Arruda P."/>
            <person name="Abreu F.A."/>
            <person name="Acencio M."/>
            <person name="Alvarenga R."/>
            <person name="Alves L.M.C."/>
            <person name="Araya J.E."/>
            <person name="Baia G.S."/>
            <person name="Baptista C.S."/>
            <person name="Barros M.H."/>
            <person name="Bonaccorsi E.D."/>
            <person name="Bordin S."/>
            <person name="Bove J.M."/>
            <person name="Briones M.R.S."/>
            <person name="Bueno M.R.P."/>
            <person name="Camargo A.A."/>
            <person name="Camargo L.E.A."/>
            <person name="Carraro D.M."/>
            <person name="Carrer H."/>
            <person name="Colauto N.B."/>
            <person name="Colombo C."/>
            <person name="Costa F.F."/>
            <person name="Costa M.C.R."/>
            <person name="Costa-Neto C.M."/>
            <person name="Coutinho L.L."/>
            <person name="Cristofani M."/>
            <person name="Dias-Neto E."/>
            <person name="Docena C."/>
            <person name="El-Dorry H."/>
            <person name="Facincani A.P."/>
            <person name="Ferreira A.J.S."/>
            <person name="Ferreira V.C.A."/>
            <person name="Ferro J.A."/>
            <person name="Fraga J.S."/>
            <person name="Franca S.C."/>
            <person name="Franco M.C."/>
            <person name="Frohme M."/>
            <person name="Furlan L.R."/>
            <person name="Garnier M."/>
            <person name="Goldman G.H."/>
            <person name="Goldman M.H.S."/>
            <person name="Gomes S.L."/>
            <person name="Gruber A."/>
            <person name="Ho P.L."/>
            <person name="Hoheisel J.D."/>
            <person name="Junqueira M.L."/>
            <person name="Kemper E.L."/>
            <person name="Kitajima J.P."/>
            <person name="Krieger J.E."/>
            <person name="Kuramae E.E."/>
            <person name="Laigret F."/>
            <person name="Lambais M.R."/>
            <person name="Leite L.C.C."/>
            <person name="Lemos E.G.M."/>
            <person name="Lemos M.V.F."/>
            <person name="Lopes S.A."/>
            <person name="Lopes C.R."/>
            <person name="Machado J.A."/>
            <person name="Machado M.A."/>
            <person name="Madeira A.M.B.N."/>
            <person name="Madeira H.M.F."/>
            <person name="Marino C.L."/>
            <person name="Marques M.V."/>
            <person name="Martins E.A.L."/>
            <person name="Martins E.M.F."/>
            <person name="Matsukuma A.Y."/>
            <person name="Menck C.F.M."/>
            <person name="Miracca E.C."/>
            <person name="Miyaki C.Y."/>
            <person name="Monteiro-Vitorello C.B."/>
            <person name="Moon D.H."/>
            <person name="Nagai M.A."/>
            <person name="Nascimento A.L.T.O."/>
            <person name="Netto L.E.S."/>
            <person name="Nhani A. Jr."/>
            <person name="Nobrega F.G."/>
            <person name="Nunes L.R."/>
            <person name="Oliveira M.A."/>
            <person name="de Oliveira M.C."/>
            <person name="de Oliveira R.C."/>
            <person name="Palmieri D.A."/>
            <person name="Paris A."/>
            <person name="Peixoto B.R."/>
            <person name="Pereira G.A.G."/>
            <person name="Pereira H.A. Jr."/>
            <person name="Pesquero J.B."/>
            <person name="Quaggio R.B."/>
            <person name="Roberto P.G."/>
            <person name="Rodrigues V."/>
            <person name="de Rosa A.J.M."/>
            <person name="de Rosa V.E. Jr."/>
            <person name="de Sa R.G."/>
            <person name="Santelli R.V."/>
            <person name="Sawasaki H.E."/>
            <person name="da Silva A.C.R."/>
            <person name="da Silva A.M."/>
            <person name="da Silva F.R."/>
            <person name="Silva W.A. Jr."/>
            <person name="da Silveira J.F."/>
            <person name="Silvestri M.L.Z."/>
            <person name="Siqueira W.J."/>
            <person name="de Souza A.A."/>
            <person name="de Souza A.P."/>
            <person name="Terenzi M.F."/>
            <person name="Truffi D."/>
            <person name="Tsai S.M."/>
            <person name="Tsuhako M.H."/>
            <person name="Vallada H."/>
            <person name="Van Sluys M.A."/>
            <person name="Verjovski-Almeida S."/>
            <person name="Vettore A.L."/>
            <person name="Zago M.A."/>
            <person name="Zatz M."/>
            <person name="Meidanis J."/>
            <person name="Setubal J.C."/>
        </authorList>
    </citation>
    <scope>NUCLEOTIDE SEQUENCE [LARGE SCALE GENOMIC DNA]</scope>
    <source>
        <strain>9a5c</strain>
    </source>
</reference>